<feature type="chain" id="PRO_1000009941" description="Uracil-DNA glycosylase">
    <location>
        <begin position="1"/>
        <end position="241"/>
    </location>
</feature>
<feature type="active site" description="Proton acceptor" evidence="1">
    <location>
        <position position="68"/>
    </location>
</feature>
<sequence length="241" mass="27138">MDSTIRLEESWKAALGPEFRNGYMTELKRFLLDEKQQGRQVFPRGGEYFRALDLTPLDRVRVVILGQDPYHGDGQAHGLCFSVRPGVRTPPSLVNIYKELKEDLGIDPARHGFLESWARQGVLLLNSVLTVERGRAASHQGRGWERFTDAVIRAVNEQAQPVVFMLWGSYAQRKAAFVDRSRHLVLTAPHPSPLSAHSGFFGCRHFSKANAFLTSKGLDPIDWRLPEDPPLAVERPTPPNC</sequence>
<dbReference type="EC" id="3.2.2.27" evidence="1"/>
<dbReference type="EMBL" id="CP000738">
    <property type="protein sequence ID" value="ABR61650.1"/>
    <property type="molecule type" value="Genomic_DNA"/>
</dbReference>
<dbReference type="RefSeq" id="WP_012067035.1">
    <property type="nucleotide sequence ID" value="NC_009636.1"/>
</dbReference>
<dbReference type="RefSeq" id="YP_001328485.1">
    <property type="nucleotide sequence ID" value="NC_009636.1"/>
</dbReference>
<dbReference type="SMR" id="A6UDC0"/>
<dbReference type="STRING" id="366394.Smed_2820"/>
<dbReference type="GeneID" id="61611648"/>
<dbReference type="KEGG" id="smd:Smed_2820"/>
<dbReference type="PATRIC" id="fig|366394.8.peg.6028"/>
<dbReference type="eggNOG" id="COG0692">
    <property type="taxonomic scope" value="Bacteria"/>
</dbReference>
<dbReference type="HOGENOM" id="CLU_032162_3_1_5"/>
<dbReference type="OrthoDB" id="9804372at2"/>
<dbReference type="Proteomes" id="UP000001108">
    <property type="component" value="Chromosome"/>
</dbReference>
<dbReference type="GO" id="GO:0005737">
    <property type="term" value="C:cytoplasm"/>
    <property type="evidence" value="ECO:0007669"/>
    <property type="project" value="UniProtKB-SubCell"/>
</dbReference>
<dbReference type="GO" id="GO:0004844">
    <property type="term" value="F:uracil DNA N-glycosylase activity"/>
    <property type="evidence" value="ECO:0007669"/>
    <property type="project" value="UniProtKB-UniRule"/>
</dbReference>
<dbReference type="GO" id="GO:0097510">
    <property type="term" value="P:base-excision repair, AP site formation via deaminated base removal"/>
    <property type="evidence" value="ECO:0007669"/>
    <property type="project" value="TreeGrafter"/>
</dbReference>
<dbReference type="CDD" id="cd10027">
    <property type="entry name" value="UDG-F1-like"/>
    <property type="match status" value="1"/>
</dbReference>
<dbReference type="FunFam" id="3.40.470.10:FF:000001">
    <property type="entry name" value="Uracil-DNA glycosylase"/>
    <property type="match status" value="1"/>
</dbReference>
<dbReference type="Gene3D" id="3.40.470.10">
    <property type="entry name" value="Uracil-DNA glycosylase-like domain"/>
    <property type="match status" value="1"/>
</dbReference>
<dbReference type="HAMAP" id="MF_00148">
    <property type="entry name" value="UDG"/>
    <property type="match status" value="1"/>
</dbReference>
<dbReference type="InterPro" id="IPR002043">
    <property type="entry name" value="UDG_fam1"/>
</dbReference>
<dbReference type="InterPro" id="IPR018085">
    <property type="entry name" value="Ura-DNA_Glyclase_AS"/>
</dbReference>
<dbReference type="InterPro" id="IPR005122">
    <property type="entry name" value="Uracil-DNA_glycosylase-like"/>
</dbReference>
<dbReference type="InterPro" id="IPR036895">
    <property type="entry name" value="Uracil-DNA_glycosylase-like_sf"/>
</dbReference>
<dbReference type="NCBIfam" id="NF003588">
    <property type="entry name" value="PRK05254.1-1"/>
    <property type="match status" value="1"/>
</dbReference>
<dbReference type="NCBIfam" id="NF003589">
    <property type="entry name" value="PRK05254.1-2"/>
    <property type="match status" value="1"/>
</dbReference>
<dbReference type="NCBIfam" id="NF003591">
    <property type="entry name" value="PRK05254.1-4"/>
    <property type="match status" value="1"/>
</dbReference>
<dbReference type="NCBIfam" id="NF003592">
    <property type="entry name" value="PRK05254.1-5"/>
    <property type="match status" value="1"/>
</dbReference>
<dbReference type="NCBIfam" id="TIGR00628">
    <property type="entry name" value="ung"/>
    <property type="match status" value="1"/>
</dbReference>
<dbReference type="PANTHER" id="PTHR11264">
    <property type="entry name" value="URACIL-DNA GLYCOSYLASE"/>
    <property type="match status" value="1"/>
</dbReference>
<dbReference type="PANTHER" id="PTHR11264:SF0">
    <property type="entry name" value="URACIL-DNA GLYCOSYLASE"/>
    <property type="match status" value="1"/>
</dbReference>
<dbReference type="Pfam" id="PF03167">
    <property type="entry name" value="UDG"/>
    <property type="match status" value="1"/>
</dbReference>
<dbReference type="SMART" id="SM00986">
    <property type="entry name" value="UDG"/>
    <property type="match status" value="1"/>
</dbReference>
<dbReference type="SMART" id="SM00987">
    <property type="entry name" value="UreE_C"/>
    <property type="match status" value="1"/>
</dbReference>
<dbReference type="SUPFAM" id="SSF52141">
    <property type="entry name" value="Uracil-DNA glycosylase-like"/>
    <property type="match status" value="1"/>
</dbReference>
<dbReference type="PROSITE" id="PS00130">
    <property type="entry name" value="U_DNA_GLYCOSYLASE"/>
    <property type="match status" value="1"/>
</dbReference>
<comment type="function">
    <text evidence="1">Excises uracil residues from the DNA which can arise as a result of misincorporation of dUMP residues by DNA polymerase or due to deamination of cytosine.</text>
</comment>
<comment type="catalytic activity">
    <reaction evidence="1">
        <text>Hydrolyzes single-stranded DNA or mismatched double-stranded DNA and polynucleotides, releasing free uracil.</text>
        <dbReference type="EC" id="3.2.2.27"/>
    </reaction>
</comment>
<comment type="subcellular location">
    <subcellularLocation>
        <location evidence="1">Cytoplasm</location>
    </subcellularLocation>
</comment>
<comment type="similarity">
    <text evidence="1">Belongs to the uracil-DNA glycosylase (UDG) superfamily. UNG family.</text>
</comment>
<organism>
    <name type="scientific">Sinorhizobium medicae (strain WSM419)</name>
    <name type="common">Ensifer medicae</name>
    <dbReference type="NCBI Taxonomy" id="366394"/>
    <lineage>
        <taxon>Bacteria</taxon>
        <taxon>Pseudomonadati</taxon>
        <taxon>Pseudomonadota</taxon>
        <taxon>Alphaproteobacteria</taxon>
        <taxon>Hyphomicrobiales</taxon>
        <taxon>Rhizobiaceae</taxon>
        <taxon>Sinorhizobium/Ensifer group</taxon>
        <taxon>Sinorhizobium</taxon>
    </lineage>
</organism>
<proteinExistence type="inferred from homology"/>
<protein>
    <recommendedName>
        <fullName evidence="1">Uracil-DNA glycosylase</fullName>
        <shortName evidence="1">UDG</shortName>
        <ecNumber evidence="1">3.2.2.27</ecNumber>
    </recommendedName>
</protein>
<evidence type="ECO:0000255" key="1">
    <source>
        <dbReference type="HAMAP-Rule" id="MF_00148"/>
    </source>
</evidence>
<accession>A6UDC0</accession>
<name>UNG_SINMW</name>
<reference key="1">
    <citation type="submission" date="2007-06" db="EMBL/GenBank/DDBJ databases">
        <title>Complete sequence of Sinorhizobium medicae WSM419 chromosome.</title>
        <authorList>
            <consortium name="US DOE Joint Genome Institute"/>
            <person name="Copeland A."/>
            <person name="Lucas S."/>
            <person name="Lapidus A."/>
            <person name="Barry K."/>
            <person name="Glavina del Rio T."/>
            <person name="Dalin E."/>
            <person name="Tice H."/>
            <person name="Pitluck S."/>
            <person name="Chain P."/>
            <person name="Malfatti S."/>
            <person name="Shin M."/>
            <person name="Vergez L."/>
            <person name="Schmutz J."/>
            <person name="Larimer F."/>
            <person name="Land M."/>
            <person name="Hauser L."/>
            <person name="Kyrpides N."/>
            <person name="Mikhailova N."/>
            <person name="Reeve W.G."/>
            <person name="Richardson P."/>
        </authorList>
    </citation>
    <scope>NUCLEOTIDE SEQUENCE [LARGE SCALE GENOMIC DNA]</scope>
    <source>
        <strain>WSM419</strain>
    </source>
</reference>
<keyword id="KW-0963">Cytoplasm</keyword>
<keyword id="KW-0227">DNA damage</keyword>
<keyword id="KW-0234">DNA repair</keyword>
<keyword id="KW-0378">Hydrolase</keyword>
<gene>
    <name evidence="1" type="primary">ung</name>
    <name type="ordered locus">Smed_2820</name>
</gene>